<accession>A9L004</accession>
<evidence type="ECO:0000255" key="1">
    <source>
        <dbReference type="HAMAP-Rule" id="MF_00244"/>
    </source>
</evidence>
<sequence>MRIGILGGTFDPIHYGHIRPAIEVKHALALDKILLMPNHIPPHKQQPNLTTAQRLKMVADVCSQLDGFELCDIEAKRDTPSYTVVTLEQLKSLHPEHELFFIMGMDSFLQLKSWYEWQRLFDFAHLVVCQRPGWQLDAAHPMQQILTARSHAHQETHEGHAKNTHKNSGQIFPVTITPQDISSTQIREQLAKGEIPVDLLMPVTLDYIQNQQLYLP</sequence>
<protein>
    <recommendedName>
        <fullName evidence="1">Probable nicotinate-nucleotide adenylyltransferase</fullName>
        <ecNumber evidence="1">2.7.7.18</ecNumber>
    </recommendedName>
    <alternativeName>
        <fullName evidence="1">Deamido-NAD(+) diphosphorylase</fullName>
    </alternativeName>
    <alternativeName>
        <fullName evidence="1">Deamido-NAD(+) pyrophosphorylase</fullName>
    </alternativeName>
    <alternativeName>
        <fullName evidence="1">Nicotinate mononucleotide adenylyltransferase</fullName>
        <shortName evidence="1">NaMN adenylyltransferase</shortName>
    </alternativeName>
</protein>
<name>NADD_SHEB9</name>
<gene>
    <name evidence="1" type="primary">nadD</name>
    <name type="ordered locus">Sbal195_3450</name>
</gene>
<reference key="1">
    <citation type="submission" date="2007-11" db="EMBL/GenBank/DDBJ databases">
        <title>Complete sequence of chromosome of Shewanella baltica OS195.</title>
        <authorList>
            <consortium name="US DOE Joint Genome Institute"/>
            <person name="Copeland A."/>
            <person name="Lucas S."/>
            <person name="Lapidus A."/>
            <person name="Barry K."/>
            <person name="Glavina del Rio T."/>
            <person name="Dalin E."/>
            <person name="Tice H."/>
            <person name="Pitluck S."/>
            <person name="Chain P."/>
            <person name="Malfatti S."/>
            <person name="Shin M."/>
            <person name="Vergez L."/>
            <person name="Schmutz J."/>
            <person name="Larimer F."/>
            <person name="Land M."/>
            <person name="Hauser L."/>
            <person name="Kyrpides N."/>
            <person name="Kim E."/>
            <person name="Brettar I."/>
            <person name="Rodrigues J."/>
            <person name="Konstantinidis K."/>
            <person name="Klappenbach J."/>
            <person name="Hofle M."/>
            <person name="Tiedje J."/>
            <person name="Richardson P."/>
        </authorList>
    </citation>
    <scope>NUCLEOTIDE SEQUENCE [LARGE SCALE GENOMIC DNA]</scope>
    <source>
        <strain>OS195</strain>
    </source>
</reference>
<keyword id="KW-0067">ATP-binding</keyword>
<keyword id="KW-0520">NAD</keyword>
<keyword id="KW-0547">Nucleotide-binding</keyword>
<keyword id="KW-0548">Nucleotidyltransferase</keyword>
<keyword id="KW-0662">Pyridine nucleotide biosynthesis</keyword>
<keyword id="KW-0808">Transferase</keyword>
<organism>
    <name type="scientific">Shewanella baltica (strain OS195)</name>
    <dbReference type="NCBI Taxonomy" id="399599"/>
    <lineage>
        <taxon>Bacteria</taxon>
        <taxon>Pseudomonadati</taxon>
        <taxon>Pseudomonadota</taxon>
        <taxon>Gammaproteobacteria</taxon>
        <taxon>Alteromonadales</taxon>
        <taxon>Shewanellaceae</taxon>
        <taxon>Shewanella</taxon>
    </lineage>
</organism>
<comment type="function">
    <text evidence="1">Catalyzes the reversible adenylation of nicotinate mononucleotide (NaMN) to nicotinic acid adenine dinucleotide (NaAD).</text>
</comment>
<comment type="catalytic activity">
    <reaction evidence="1">
        <text>nicotinate beta-D-ribonucleotide + ATP + H(+) = deamido-NAD(+) + diphosphate</text>
        <dbReference type="Rhea" id="RHEA:22860"/>
        <dbReference type="ChEBI" id="CHEBI:15378"/>
        <dbReference type="ChEBI" id="CHEBI:30616"/>
        <dbReference type="ChEBI" id="CHEBI:33019"/>
        <dbReference type="ChEBI" id="CHEBI:57502"/>
        <dbReference type="ChEBI" id="CHEBI:58437"/>
        <dbReference type="EC" id="2.7.7.18"/>
    </reaction>
</comment>
<comment type="pathway">
    <text evidence="1">Cofactor biosynthesis; NAD(+) biosynthesis; deamido-NAD(+) from nicotinate D-ribonucleotide: step 1/1.</text>
</comment>
<comment type="similarity">
    <text evidence="1">Belongs to the NadD family.</text>
</comment>
<dbReference type="EC" id="2.7.7.18" evidence="1"/>
<dbReference type="EMBL" id="CP000891">
    <property type="protein sequence ID" value="ABX50612.1"/>
    <property type="molecule type" value="Genomic_DNA"/>
</dbReference>
<dbReference type="RefSeq" id="WP_012197527.1">
    <property type="nucleotide sequence ID" value="NC_009997.1"/>
</dbReference>
<dbReference type="SMR" id="A9L004"/>
<dbReference type="GeneID" id="11773497"/>
<dbReference type="KEGG" id="sbn:Sbal195_3450"/>
<dbReference type="HOGENOM" id="CLU_069765_0_0_6"/>
<dbReference type="UniPathway" id="UPA00253">
    <property type="reaction ID" value="UER00332"/>
</dbReference>
<dbReference type="Proteomes" id="UP000000770">
    <property type="component" value="Chromosome"/>
</dbReference>
<dbReference type="GO" id="GO:0005524">
    <property type="term" value="F:ATP binding"/>
    <property type="evidence" value="ECO:0007669"/>
    <property type="project" value="UniProtKB-KW"/>
</dbReference>
<dbReference type="GO" id="GO:0004515">
    <property type="term" value="F:nicotinate-nucleotide adenylyltransferase activity"/>
    <property type="evidence" value="ECO:0007669"/>
    <property type="project" value="UniProtKB-UniRule"/>
</dbReference>
<dbReference type="GO" id="GO:0009435">
    <property type="term" value="P:NAD biosynthetic process"/>
    <property type="evidence" value="ECO:0007669"/>
    <property type="project" value="UniProtKB-UniRule"/>
</dbReference>
<dbReference type="CDD" id="cd02165">
    <property type="entry name" value="NMNAT"/>
    <property type="match status" value="1"/>
</dbReference>
<dbReference type="FunFam" id="3.40.50.620:FF:000039">
    <property type="entry name" value="Probable nicotinate-nucleotide adenylyltransferase"/>
    <property type="match status" value="1"/>
</dbReference>
<dbReference type="Gene3D" id="3.40.50.620">
    <property type="entry name" value="HUPs"/>
    <property type="match status" value="1"/>
</dbReference>
<dbReference type="HAMAP" id="MF_00244">
    <property type="entry name" value="NaMN_adenylyltr"/>
    <property type="match status" value="1"/>
</dbReference>
<dbReference type="InterPro" id="IPR004821">
    <property type="entry name" value="Cyt_trans-like"/>
</dbReference>
<dbReference type="InterPro" id="IPR005248">
    <property type="entry name" value="NadD/NMNAT"/>
</dbReference>
<dbReference type="InterPro" id="IPR014729">
    <property type="entry name" value="Rossmann-like_a/b/a_fold"/>
</dbReference>
<dbReference type="NCBIfam" id="TIGR00125">
    <property type="entry name" value="cyt_tran_rel"/>
    <property type="match status" value="1"/>
</dbReference>
<dbReference type="NCBIfam" id="TIGR00482">
    <property type="entry name" value="nicotinate (nicotinamide) nucleotide adenylyltransferase"/>
    <property type="match status" value="1"/>
</dbReference>
<dbReference type="NCBIfam" id="NF000839">
    <property type="entry name" value="PRK00071.1-1"/>
    <property type="match status" value="1"/>
</dbReference>
<dbReference type="NCBIfam" id="NF000840">
    <property type="entry name" value="PRK00071.1-3"/>
    <property type="match status" value="1"/>
</dbReference>
<dbReference type="PANTHER" id="PTHR39321">
    <property type="entry name" value="NICOTINATE-NUCLEOTIDE ADENYLYLTRANSFERASE-RELATED"/>
    <property type="match status" value="1"/>
</dbReference>
<dbReference type="PANTHER" id="PTHR39321:SF3">
    <property type="entry name" value="PHOSPHOPANTETHEINE ADENYLYLTRANSFERASE"/>
    <property type="match status" value="1"/>
</dbReference>
<dbReference type="Pfam" id="PF01467">
    <property type="entry name" value="CTP_transf_like"/>
    <property type="match status" value="1"/>
</dbReference>
<dbReference type="SUPFAM" id="SSF52374">
    <property type="entry name" value="Nucleotidylyl transferase"/>
    <property type="match status" value="1"/>
</dbReference>
<proteinExistence type="inferred from homology"/>
<feature type="chain" id="PRO_1000078389" description="Probable nicotinate-nucleotide adenylyltransferase">
    <location>
        <begin position="1"/>
        <end position="216"/>
    </location>
</feature>